<evidence type="ECO:0000255" key="1">
    <source>
        <dbReference type="HAMAP-Rule" id="MF_01448"/>
    </source>
</evidence>
<organism>
    <name type="scientific">Streptococcus pyogenes serotype M3 (strain SSI-1)</name>
    <dbReference type="NCBI Taxonomy" id="193567"/>
    <lineage>
        <taxon>Bacteria</taxon>
        <taxon>Bacillati</taxon>
        <taxon>Bacillota</taxon>
        <taxon>Bacilli</taxon>
        <taxon>Lactobacillales</taxon>
        <taxon>Streptococcaceae</taxon>
        <taxon>Streptococcus</taxon>
    </lineage>
</organism>
<sequence>MTHNHENDHQHEVITLVDEQGNETLFEILLTIDGREEFGKNYVLLVPAGSEEDESGEIEIQAYSFTENEDGTEGDLQPIPEDSDAEWDMIEEVFNSFLDEN</sequence>
<accession>P0DH27</accession>
<accession>Q79W14</accession>
<accession>Q7CEL9</accession>
<gene>
    <name type="ordered locus">SPs1794</name>
</gene>
<dbReference type="EMBL" id="BA000034">
    <property type="protein sequence ID" value="BAC64889.1"/>
    <property type="molecule type" value="Genomic_DNA"/>
</dbReference>
<dbReference type="RefSeq" id="WP_002982199.1">
    <property type="nucleotide sequence ID" value="NC_004606.1"/>
</dbReference>
<dbReference type="KEGG" id="sps:SPs1794"/>
<dbReference type="HOGENOM" id="CLU_146610_2_1_9"/>
<dbReference type="HAMAP" id="MF_01448">
    <property type="entry name" value="UPF0473"/>
    <property type="match status" value="1"/>
</dbReference>
<dbReference type="InterPro" id="IPR009711">
    <property type="entry name" value="UPF0473"/>
</dbReference>
<dbReference type="NCBIfam" id="NF010215">
    <property type="entry name" value="PRK13678.1-2"/>
    <property type="match status" value="1"/>
</dbReference>
<dbReference type="NCBIfam" id="NF010217">
    <property type="entry name" value="PRK13678.1-4"/>
    <property type="match status" value="1"/>
</dbReference>
<dbReference type="PANTHER" id="PTHR40066">
    <property type="entry name" value="UPF0473 PROTEIN CBO2561/CLC_2432"/>
    <property type="match status" value="1"/>
</dbReference>
<dbReference type="PANTHER" id="PTHR40066:SF1">
    <property type="entry name" value="UPF0473 PROTEIN CBO2561_CLC_2432"/>
    <property type="match status" value="1"/>
</dbReference>
<dbReference type="Pfam" id="PF06949">
    <property type="entry name" value="DUF1292"/>
    <property type="match status" value="1"/>
</dbReference>
<proteinExistence type="inferred from homology"/>
<feature type="chain" id="PRO_0000411653" description="UPF0473 protein SPs1794">
    <location>
        <begin position="1"/>
        <end position="101"/>
    </location>
</feature>
<comment type="similarity">
    <text evidence="1">Belongs to the UPF0473 family.</text>
</comment>
<reference key="1">
    <citation type="journal article" date="2003" name="Genome Res.">
        <title>Genome sequence of an M3 strain of Streptococcus pyogenes reveals a large-scale genomic rearrangement in invasive strains and new insights into phage evolution.</title>
        <authorList>
            <person name="Nakagawa I."/>
            <person name="Kurokawa K."/>
            <person name="Yamashita A."/>
            <person name="Nakata M."/>
            <person name="Tomiyasu Y."/>
            <person name="Okahashi N."/>
            <person name="Kawabata S."/>
            <person name="Yamazaki K."/>
            <person name="Shiba T."/>
            <person name="Yasunaga T."/>
            <person name="Hayashi H."/>
            <person name="Hattori M."/>
            <person name="Hamada S."/>
        </authorList>
    </citation>
    <scope>NUCLEOTIDE SEQUENCE [LARGE SCALE GENOMIC DNA]</scope>
    <source>
        <strain>SSI-1</strain>
    </source>
</reference>
<name>Y1796_STRPQ</name>
<protein>
    <recommendedName>
        <fullName evidence="1">UPF0473 protein SPs1794</fullName>
    </recommendedName>
</protein>